<protein>
    <recommendedName>
        <fullName evidence="1">Small ribosomal subunit protein uS8</fullName>
    </recommendedName>
    <alternativeName>
        <fullName evidence="2">30S ribosomal protein S8</fullName>
    </alternativeName>
</protein>
<keyword id="KW-1185">Reference proteome</keyword>
<keyword id="KW-0687">Ribonucleoprotein</keyword>
<keyword id="KW-0689">Ribosomal protein</keyword>
<keyword id="KW-0694">RNA-binding</keyword>
<keyword id="KW-0699">rRNA-binding</keyword>
<feature type="chain" id="PRO_0000126526" description="Small ribosomal subunit protein uS8">
    <location>
        <begin position="1"/>
        <end position="131"/>
    </location>
</feature>
<comment type="function">
    <text evidence="1">One of the primary rRNA binding proteins, it binds directly to 16S rRNA central domain where it helps coordinate assembly of the platform of the 30S subunit.</text>
</comment>
<comment type="subunit">
    <text evidence="1">Part of the 30S ribosomal subunit. Contacts proteins S5 and S12.</text>
</comment>
<comment type="similarity">
    <text evidence="1">Belongs to the universal ribosomal protein uS8 family.</text>
</comment>
<proteinExistence type="inferred from homology"/>
<sequence>MVNDIIADSLTRIRNAAMRRLDYTTLYYAKIVVSILEVFLAKGFIESYKVIDKDGKQSINVVLKYDEKGRSVISEIKRISKSGRRVYKGRDELKRFKNGYGTIVVSTSKGVIGNEEAYKANVGGEALCSIW</sequence>
<organism>
    <name type="scientific">Wolinella succinogenes (strain ATCC 29543 / DSM 1740 / CCUG 13145 / JCM 31913 / LMG 7466 / NCTC 11488 / FDC 602W)</name>
    <name type="common">Vibrio succinogenes</name>
    <dbReference type="NCBI Taxonomy" id="273121"/>
    <lineage>
        <taxon>Bacteria</taxon>
        <taxon>Pseudomonadati</taxon>
        <taxon>Campylobacterota</taxon>
        <taxon>Epsilonproteobacteria</taxon>
        <taxon>Campylobacterales</taxon>
        <taxon>Helicobacteraceae</taxon>
        <taxon>Wolinella</taxon>
    </lineage>
</organism>
<reference key="1">
    <citation type="journal article" date="2003" name="Proc. Natl. Acad. Sci. U.S.A.">
        <title>Complete genome sequence and analysis of Wolinella succinogenes.</title>
        <authorList>
            <person name="Baar C."/>
            <person name="Eppinger M."/>
            <person name="Raddatz G."/>
            <person name="Simon J."/>
            <person name="Lanz C."/>
            <person name="Klimmek O."/>
            <person name="Nandakumar R."/>
            <person name="Gross R."/>
            <person name="Rosinus A."/>
            <person name="Keller H."/>
            <person name="Jagtap P."/>
            <person name="Linke B."/>
            <person name="Meyer F."/>
            <person name="Lederer H."/>
            <person name="Schuster S.C."/>
        </authorList>
    </citation>
    <scope>NUCLEOTIDE SEQUENCE [LARGE SCALE GENOMIC DNA]</scope>
    <source>
        <strain>ATCC 29543 / DSM 1740 / CCUG 13145 / JCM 31913 / LMG 7466 / NCTC 11488 / FDC 602W</strain>
    </source>
</reference>
<name>RS8_WOLSU</name>
<gene>
    <name evidence="1" type="primary">rpsH</name>
    <name type="ordered locus">WS1703</name>
</gene>
<dbReference type="EMBL" id="BX571661">
    <property type="protein sequence ID" value="CAE10730.1"/>
    <property type="molecule type" value="Genomic_DNA"/>
</dbReference>
<dbReference type="RefSeq" id="WP_011139514.1">
    <property type="nucleotide sequence ID" value="NC_005090.1"/>
</dbReference>
<dbReference type="SMR" id="Q7M8E6"/>
<dbReference type="STRING" id="273121.WS1703"/>
<dbReference type="KEGG" id="wsu:WS1703"/>
<dbReference type="eggNOG" id="COG0096">
    <property type="taxonomic scope" value="Bacteria"/>
</dbReference>
<dbReference type="HOGENOM" id="CLU_098428_0_2_7"/>
<dbReference type="Proteomes" id="UP000000422">
    <property type="component" value="Chromosome"/>
</dbReference>
<dbReference type="GO" id="GO:1990904">
    <property type="term" value="C:ribonucleoprotein complex"/>
    <property type="evidence" value="ECO:0007669"/>
    <property type="project" value="UniProtKB-KW"/>
</dbReference>
<dbReference type="GO" id="GO:0005840">
    <property type="term" value="C:ribosome"/>
    <property type="evidence" value="ECO:0007669"/>
    <property type="project" value="UniProtKB-KW"/>
</dbReference>
<dbReference type="GO" id="GO:0019843">
    <property type="term" value="F:rRNA binding"/>
    <property type="evidence" value="ECO:0007669"/>
    <property type="project" value="UniProtKB-UniRule"/>
</dbReference>
<dbReference type="GO" id="GO:0003735">
    <property type="term" value="F:structural constituent of ribosome"/>
    <property type="evidence" value="ECO:0007669"/>
    <property type="project" value="InterPro"/>
</dbReference>
<dbReference type="GO" id="GO:0006412">
    <property type="term" value="P:translation"/>
    <property type="evidence" value="ECO:0007669"/>
    <property type="project" value="UniProtKB-UniRule"/>
</dbReference>
<dbReference type="FunFam" id="3.30.1370.30:FF:000002">
    <property type="entry name" value="30S ribosomal protein S8"/>
    <property type="match status" value="1"/>
</dbReference>
<dbReference type="FunFam" id="3.30.1490.10:FF:000001">
    <property type="entry name" value="30S ribosomal protein S8"/>
    <property type="match status" value="1"/>
</dbReference>
<dbReference type="Gene3D" id="3.30.1370.30">
    <property type="match status" value="1"/>
</dbReference>
<dbReference type="Gene3D" id="3.30.1490.10">
    <property type="match status" value="1"/>
</dbReference>
<dbReference type="HAMAP" id="MF_01302_B">
    <property type="entry name" value="Ribosomal_uS8_B"/>
    <property type="match status" value="1"/>
</dbReference>
<dbReference type="InterPro" id="IPR000630">
    <property type="entry name" value="Ribosomal_uS8"/>
</dbReference>
<dbReference type="InterPro" id="IPR047863">
    <property type="entry name" value="Ribosomal_uS8_CS"/>
</dbReference>
<dbReference type="InterPro" id="IPR035987">
    <property type="entry name" value="Ribosomal_uS8_sf"/>
</dbReference>
<dbReference type="NCBIfam" id="NF001109">
    <property type="entry name" value="PRK00136.1"/>
    <property type="match status" value="1"/>
</dbReference>
<dbReference type="PANTHER" id="PTHR11758">
    <property type="entry name" value="40S RIBOSOMAL PROTEIN S15A"/>
    <property type="match status" value="1"/>
</dbReference>
<dbReference type="Pfam" id="PF00410">
    <property type="entry name" value="Ribosomal_S8"/>
    <property type="match status" value="1"/>
</dbReference>
<dbReference type="SUPFAM" id="SSF56047">
    <property type="entry name" value="Ribosomal protein S8"/>
    <property type="match status" value="1"/>
</dbReference>
<dbReference type="PROSITE" id="PS00053">
    <property type="entry name" value="RIBOSOMAL_S8"/>
    <property type="match status" value="1"/>
</dbReference>
<evidence type="ECO:0000255" key="1">
    <source>
        <dbReference type="HAMAP-Rule" id="MF_01302"/>
    </source>
</evidence>
<evidence type="ECO:0000305" key="2"/>
<accession>Q7M8E6</accession>